<accession>A0A396GMX6</accession>
<accession>B7FFF7</accession>
<accession>I3TAC6</accession>
<sequence>MKREHKLEHEDMSSGSGKSGVCWEDDGGGMDELLAVVGYKVKSSDMAEVAQKLEQLEQAMMGNNFHDHDESTIAQHLSNDTVHYNPSDISNWLQTMLSNFDPQPNNPSVNSDDNDLNAIPGKAIYAADEFTSRKRVKRNESVTVTTESTTTRPIMVVETQEKGIRLVHSLMACAEAVEQNNLKMAEALVKQIGYLAVSQEGAMRKVATYFAEGLARRIYGVFPQHSVSDSLQIHFYETCPNLKFAHFTANQAILEAFQGKSSVHVIDFSINQGMQWPALMQALALRPGGPPAFRLTGIGPPASDNSDHLQQVGWRLAQFAQTIHVQFEYRGFVANSLADLDASMLELRSPETESVAVNSVFELHKLNARPGALEKVFSVIRQIRPEIVTVVEQEANHNGPAFLDRFTESLHYYSTLFDSLEGSSVEPQDKAMSEVYLGKQICNVVACEGTDRVERHETLNQWRNRFNSAGFSPVHLGSNAFKQASMLLALFAGGDGYKVEENDGCLMLGWHTRPLIATSAWKLAAANSVVVSH</sequence>
<gene>
    <name evidence="6" type="primary">DELLA2</name>
    <name evidence="8" type="ORF">MtrunA17_Chr8g0376381</name>
</gene>
<keyword id="KW-0939">Gibberellin signaling pathway</keyword>
<keyword id="KW-0539">Nucleus</keyword>
<keyword id="KW-1185">Reference proteome</keyword>
<keyword id="KW-0804">Transcription</keyword>
<keyword id="KW-0805">Transcription regulation</keyword>
<keyword id="KW-0832">Ubl conjugation</keyword>
<protein>
    <recommendedName>
        <fullName evidence="6">DELLA protein 2</fullName>
        <shortName evidence="6">MtDELLA2</shortName>
    </recommendedName>
</protein>
<feature type="chain" id="PRO_0000450053" description="DELLA protein 2">
    <location>
        <begin position="1"/>
        <end position="533"/>
    </location>
</feature>
<feature type="domain" description="GRAS" evidence="3">
    <location>
        <begin position="157"/>
        <end position="522"/>
    </location>
</feature>
<feature type="region of interest" description="Disordered" evidence="4">
    <location>
        <begin position="1"/>
        <end position="24"/>
    </location>
</feature>
<feature type="region of interest" description="Leucine repeat I (LRI)" evidence="3">
    <location>
        <begin position="164"/>
        <end position="218"/>
    </location>
</feature>
<feature type="region of interest" description="Required for possible homodimerization" evidence="2">
    <location>
        <begin position="166"/>
        <end position="203"/>
    </location>
</feature>
<feature type="region of interest" description="VHIID" evidence="3">
    <location>
        <begin position="232"/>
        <end position="297"/>
    </location>
</feature>
<feature type="region of interest" description="Leucine repeat II (LRII)" evidence="3">
    <location>
        <begin position="311"/>
        <end position="343"/>
    </location>
</feature>
<feature type="region of interest" description="PFYRE" evidence="3">
    <location>
        <begin position="355"/>
        <end position="443"/>
    </location>
</feature>
<feature type="region of interest" description="SAW" evidence="3">
    <location>
        <begin position="446"/>
        <end position="522"/>
    </location>
</feature>
<feature type="short sequence motif" description="DELLA motif" evidence="1">
    <location>
        <begin position="31"/>
        <end position="35"/>
    </location>
</feature>
<feature type="short sequence motif" description="LxCxE motif; degenerate" evidence="3">
    <location>
        <begin position="171"/>
        <end position="175"/>
    </location>
</feature>
<feature type="short sequence motif" description="VHIID" evidence="3">
    <location>
        <begin position="263"/>
        <end position="267"/>
    </location>
</feature>
<feature type="short sequence motif" description="LXXLL motif; degenerate" evidence="3">
    <location>
        <begin position="363"/>
        <end position="367"/>
    </location>
</feature>
<feature type="compositionally biased region" description="Basic and acidic residues" evidence="4">
    <location>
        <begin position="1"/>
        <end position="12"/>
    </location>
</feature>
<feature type="sequence conflict" description="In Ref. 4; ACJ83347." evidence="7" ref="4">
    <original>T</original>
    <variation>A</variation>
    <location>
        <position position="159"/>
    </location>
</feature>
<feature type="sequence conflict" description="In Ref. 4; ACJ83347." evidence="7" ref="4">
    <original>R</original>
    <variation>G</variation>
    <location>
        <position position="204"/>
    </location>
</feature>
<feature type="sequence conflict" description="In Ref. 5; AFK49468." evidence="7" ref="5">
    <original>V</original>
    <variation>G</variation>
    <location>
        <position position="453"/>
    </location>
</feature>
<evidence type="ECO:0000250" key="1">
    <source>
        <dbReference type="UniProtKB" id="A0A396IUP1"/>
    </source>
</evidence>
<evidence type="ECO:0000250" key="2">
    <source>
        <dbReference type="UniProtKB" id="Q7G7J6"/>
    </source>
</evidence>
<evidence type="ECO:0000255" key="3">
    <source>
        <dbReference type="PROSITE-ProRule" id="PRU01191"/>
    </source>
</evidence>
<evidence type="ECO:0000256" key="4">
    <source>
        <dbReference type="SAM" id="MobiDB-lite"/>
    </source>
</evidence>
<evidence type="ECO:0000269" key="5">
    <source>
    </source>
</evidence>
<evidence type="ECO:0000303" key="6">
    <source>
    </source>
</evidence>
<evidence type="ECO:0000305" key="7"/>
<evidence type="ECO:0000312" key="8">
    <source>
        <dbReference type="EMBL" id="RHN42390.1"/>
    </source>
</evidence>
<reference key="1">
    <citation type="journal article" date="2011" name="Nature">
        <title>The Medicago genome provides insight into the evolution of rhizobial symbioses.</title>
        <authorList>
            <person name="Young N.D."/>
            <person name="Debelle F."/>
            <person name="Oldroyd G.E.D."/>
            <person name="Geurts R."/>
            <person name="Cannon S.B."/>
            <person name="Udvardi M.K."/>
            <person name="Benedito V.A."/>
            <person name="Mayer K.F.X."/>
            <person name="Gouzy J."/>
            <person name="Schoof H."/>
            <person name="Van de Peer Y."/>
            <person name="Proost S."/>
            <person name="Cook D.R."/>
            <person name="Meyers B.C."/>
            <person name="Spannagl M."/>
            <person name="Cheung F."/>
            <person name="De Mita S."/>
            <person name="Krishnakumar V."/>
            <person name="Gundlach H."/>
            <person name="Zhou S."/>
            <person name="Mudge J."/>
            <person name="Bharti A.K."/>
            <person name="Murray J.D."/>
            <person name="Naoumkina M.A."/>
            <person name="Rosen B."/>
            <person name="Silverstein K.A.T."/>
            <person name="Tang H."/>
            <person name="Rombauts S."/>
            <person name="Zhao P.X."/>
            <person name="Zhou P."/>
            <person name="Barbe V."/>
            <person name="Bardou P."/>
            <person name="Bechner M."/>
            <person name="Bellec A."/>
            <person name="Berger A."/>
            <person name="Berges H."/>
            <person name="Bidwell S."/>
            <person name="Bisseling T."/>
            <person name="Choisne N."/>
            <person name="Couloux A."/>
            <person name="Denny R."/>
            <person name="Deshpande S."/>
            <person name="Dai X."/>
            <person name="Doyle J.J."/>
            <person name="Dudez A.-M."/>
            <person name="Farmer A.D."/>
            <person name="Fouteau S."/>
            <person name="Franken C."/>
            <person name="Gibelin C."/>
            <person name="Gish J."/>
            <person name="Goldstein S."/>
            <person name="Gonzalez A.J."/>
            <person name="Green P.J."/>
            <person name="Hallab A."/>
            <person name="Hartog M."/>
            <person name="Hua A."/>
            <person name="Humphray S.J."/>
            <person name="Jeong D.-H."/>
            <person name="Jing Y."/>
            <person name="Jocker A."/>
            <person name="Kenton S.M."/>
            <person name="Kim D.-J."/>
            <person name="Klee K."/>
            <person name="Lai H."/>
            <person name="Lang C."/>
            <person name="Lin S."/>
            <person name="Macmil S.L."/>
            <person name="Magdelenat G."/>
            <person name="Matthews L."/>
            <person name="McCorrison J."/>
            <person name="Monaghan E.L."/>
            <person name="Mun J.-H."/>
            <person name="Najar F.Z."/>
            <person name="Nicholson C."/>
            <person name="Noirot C."/>
            <person name="O'Bleness M."/>
            <person name="Paule C.R."/>
            <person name="Poulain J."/>
            <person name="Prion F."/>
            <person name="Qin B."/>
            <person name="Qu C."/>
            <person name="Retzel E.F."/>
            <person name="Riddle C."/>
            <person name="Sallet E."/>
            <person name="Samain S."/>
            <person name="Samson N."/>
            <person name="Sanders I."/>
            <person name="Saurat O."/>
            <person name="Scarpelli C."/>
            <person name="Schiex T."/>
            <person name="Segurens B."/>
            <person name="Severin A.J."/>
            <person name="Sherrier D.J."/>
            <person name="Shi R."/>
            <person name="Sims S."/>
            <person name="Singer S.R."/>
            <person name="Sinharoy S."/>
            <person name="Sterck L."/>
            <person name="Viollet A."/>
            <person name="Wang B.-B."/>
            <person name="Wang K."/>
            <person name="Wang M."/>
            <person name="Wang X."/>
            <person name="Warfsmann J."/>
            <person name="Weissenbach J."/>
            <person name="White D.D."/>
            <person name="White J.D."/>
            <person name="Wiley G.B."/>
            <person name="Wincker P."/>
            <person name="Xing Y."/>
            <person name="Yang L."/>
            <person name="Yao Z."/>
            <person name="Ying F."/>
            <person name="Zhai J."/>
            <person name="Zhou L."/>
            <person name="Zuber A."/>
            <person name="Denarie J."/>
            <person name="Dixon R.A."/>
            <person name="May G.D."/>
            <person name="Schwartz D.C."/>
            <person name="Rogers J."/>
            <person name="Quetier F."/>
            <person name="Town C.D."/>
            <person name="Roe B.A."/>
        </authorList>
    </citation>
    <scope>NUCLEOTIDE SEQUENCE [LARGE SCALE GENOMIC DNA]</scope>
    <source>
        <strain>cv. Jemalong A17</strain>
    </source>
</reference>
<reference key="2">
    <citation type="journal article" date="2014" name="BMC Genomics">
        <title>An improved genome release (version Mt4.0) for the model legume Medicago truncatula.</title>
        <authorList>
            <person name="Tang H."/>
            <person name="Krishnakumar V."/>
            <person name="Bidwell S."/>
            <person name="Rosen B."/>
            <person name="Chan A."/>
            <person name="Zhou S."/>
            <person name="Gentzbittel L."/>
            <person name="Childs K.L."/>
            <person name="Yandell M."/>
            <person name="Gundlach H."/>
            <person name="Mayer K.F."/>
            <person name="Schwartz D.C."/>
            <person name="Town C.D."/>
        </authorList>
    </citation>
    <scope>GENOME REANNOTATION</scope>
    <source>
        <strain>cv. Jemalong A17</strain>
    </source>
</reference>
<reference key="3">
    <citation type="journal article" date="2018" name="Nat. Plants">
        <title>Whole-genome landscape of Medicago truncatula symbiotic genes.</title>
        <authorList>
            <person name="Pecrix Y."/>
            <person name="Staton S.E."/>
            <person name="Sallet E."/>
            <person name="Lelandais-Briere C."/>
            <person name="Moreau S."/>
            <person name="Carrere S."/>
            <person name="Blein T."/>
            <person name="Jardinaud M.F."/>
            <person name="Latrasse D."/>
            <person name="Zouine M."/>
            <person name="Zahm M."/>
            <person name="Kreplak J."/>
            <person name="Mayjonade B."/>
            <person name="Satge C."/>
            <person name="Perez M."/>
            <person name="Cauet S."/>
            <person name="Marande W."/>
            <person name="Chantry-Darmon C."/>
            <person name="Lopez-Roques C."/>
            <person name="Bouchez O."/>
            <person name="Berard A."/>
            <person name="Debelle F."/>
            <person name="Munos S."/>
            <person name="Bendahmane A."/>
            <person name="Berges H."/>
            <person name="Niebel A."/>
            <person name="Buitink J."/>
            <person name="Frugier F."/>
            <person name="Benhamed M."/>
            <person name="Crespi M."/>
            <person name="Gouzy J."/>
            <person name="Gamas P."/>
        </authorList>
    </citation>
    <scope>NUCLEOTIDE SEQUENCE [LARGE SCALE GENOMIC DNA]</scope>
    <source>
        <strain>cv. Jemalong A17</strain>
    </source>
</reference>
<reference key="4">
    <citation type="submission" date="2008-12" db="EMBL/GenBank/DDBJ databases">
        <title>Medicago truncatula full length cdna cloning project.</title>
        <authorList>
            <person name="Moskal W."/>
            <person name="Chan A."/>
            <person name="Cheung F."/>
            <person name="Xiao Y."/>
            <person name="Town C.D."/>
        </authorList>
    </citation>
    <scope>NUCLEOTIDE SEQUENCE [LARGE SCALE MRNA] OF 1-232</scope>
</reference>
<reference key="5">
    <citation type="submission" date="2012-05" db="EMBL/GenBank/DDBJ databases">
        <authorList>
            <person name="Krishnakumar V."/>
            <person name="Cheung F."/>
            <person name="Xiao Y."/>
            <person name="Chan A."/>
            <person name="Moskal W.A."/>
            <person name="Town C.D."/>
        </authorList>
    </citation>
    <scope>NUCLEOTIDE SEQUENCE [MRNA] OF 227-453</scope>
</reference>
<reference key="6">
    <citation type="journal article" date="2013" name="Proc. Natl. Acad. Sci. U.S.A.">
        <title>DELLA proteins regulate arbuscule formation in arbuscular mycorrhizal symbiosis.</title>
        <authorList>
            <person name="Floss D.S."/>
            <person name="Levy J.G."/>
            <person name="Levesque-Tremblay V."/>
            <person name="Pumplin N."/>
            <person name="Harrison M.J."/>
        </authorList>
    </citation>
    <scope>FUNCTION</scope>
    <scope>DISRUPTION PHENOTYPE</scope>
    <scope>INDUCTION BY PHOSPHATE DEPRIVATION AND GLOMUS VERSIFORME</scope>
</reference>
<proteinExistence type="evidence at transcript level"/>
<comment type="function">
    <text evidence="2 5">Probable transcriptional regulator that acts as a repressor of the gibberellin (GA) signaling pathway (By similarity). Probably acts by participating in large multiprotein complexes that repress transcription of GA-inducible genes (By similarity). Upon GA application, it is degraded by the proteasome, allowing the GA signaling pathway (By similarity). Together with DELLA1, required to enable arbuscule development during arbuscular mycorrhizal (AM) symbiosis with AM fungi (e.g. Glomus versiforme) via the regulation of RAM1 which, in turn, regulates various AM genes (e.g. NSP1, NSP2, PT4, LEC5, RAM2, EXO70I, STR and RAD1) (PubMed:24297892).</text>
</comment>
<comment type="subunit">
    <text evidence="2">May be a homodimer.</text>
</comment>
<comment type="subcellular location">
    <subcellularLocation>
        <location evidence="1">Nucleus</location>
    </subcellularLocation>
</comment>
<comment type="induction">
    <text evidence="5">Accumulates upon phosphate (Pi) deprivation (PubMed:24297892). Expressed during arbuscular mycorrhizal (AM) symbiosis with AM fungi (e.g. Glomus versiforme) (PubMed:24297892).</text>
</comment>
<comment type="domain">
    <text evidence="2">The DELLA motif is required for its GA-induced degradation.</text>
</comment>
<comment type="PTM">
    <text evidence="2">Ubiquitinated. Upon GA application it is ubiquitinated, leading to its subsequent degradation.</text>
</comment>
<comment type="disruption phenotype">
    <text evidence="5">The double mutant della1/della2 exhibit slender shoots, early flowering and reduced root fresh weight (PubMed:24297892). Impaired arbuscule formation during arbuscular mycorrhizal (AM) symbiosis with AM fungi (e.g. Glomus versiforme) in plant missing both DELLA1 and DELLA2 associated with a reduced expression of AM genes (e.g. NSP1, NSP2, PT4 and LEC5); these phenotypes are phenocopied by treatment with gibberellic acid (GA) (PubMed:24297892).</text>
</comment>
<comment type="similarity">
    <text evidence="7">Belongs to the GRAS family. DELLA subfamily.</text>
</comment>
<comment type="sequence caution" evidence="7">
    <conflict type="erroneous initiation">
        <sequence resource="EMBL-CDS" id="AFK49468"/>
    </conflict>
    <text>Truncated N-terminus.</text>
</comment>
<organism>
    <name type="scientific">Medicago truncatula</name>
    <name type="common">Barrel medic</name>
    <name type="synonym">Medicago tribuloides</name>
    <dbReference type="NCBI Taxonomy" id="3880"/>
    <lineage>
        <taxon>Eukaryota</taxon>
        <taxon>Viridiplantae</taxon>
        <taxon>Streptophyta</taxon>
        <taxon>Embryophyta</taxon>
        <taxon>Tracheophyta</taxon>
        <taxon>Spermatophyta</taxon>
        <taxon>Magnoliopsida</taxon>
        <taxon>eudicotyledons</taxon>
        <taxon>Gunneridae</taxon>
        <taxon>Pentapetalae</taxon>
        <taxon>rosids</taxon>
        <taxon>fabids</taxon>
        <taxon>Fabales</taxon>
        <taxon>Fabaceae</taxon>
        <taxon>Papilionoideae</taxon>
        <taxon>50 kb inversion clade</taxon>
        <taxon>NPAAA clade</taxon>
        <taxon>Hologalegina</taxon>
        <taxon>IRL clade</taxon>
        <taxon>Trifolieae</taxon>
        <taxon>Medicago</taxon>
    </lineage>
</organism>
<name>DELA2_MEDTR</name>
<dbReference type="EMBL" id="CM001224">
    <property type="status" value="NOT_ANNOTATED_CDS"/>
    <property type="molecule type" value="Genomic_DNA"/>
</dbReference>
<dbReference type="EMBL" id="PSQE01000008">
    <property type="protein sequence ID" value="RHN42390.1"/>
    <property type="molecule type" value="Genomic_DNA"/>
</dbReference>
<dbReference type="EMBL" id="BT050678">
    <property type="protein sequence ID" value="ACJ83347.1"/>
    <property type="molecule type" value="mRNA"/>
</dbReference>
<dbReference type="EMBL" id="BT149674">
    <property type="protein sequence ID" value="AFK49468.1"/>
    <property type="status" value="ALT_INIT"/>
    <property type="molecule type" value="mRNA"/>
</dbReference>
<dbReference type="SMR" id="A0A396GMX6"/>
<dbReference type="EnsemblPlants" id="rna48827">
    <property type="protein sequence ID" value="RHN42390.1"/>
    <property type="gene ID" value="gene48827"/>
</dbReference>
<dbReference type="Gramene" id="rna48827">
    <property type="protein sequence ID" value="RHN42390.1"/>
    <property type="gene ID" value="gene48827"/>
</dbReference>
<dbReference type="OrthoDB" id="761920at2759"/>
<dbReference type="Proteomes" id="UP000002051">
    <property type="component" value="Chromosome 8"/>
</dbReference>
<dbReference type="Proteomes" id="UP000265566">
    <property type="component" value="Chromosome 8"/>
</dbReference>
<dbReference type="GO" id="GO:0005634">
    <property type="term" value="C:nucleus"/>
    <property type="evidence" value="ECO:0000250"/>
    <property type="project" value="UniProtKB"/>
</dbReference>
<dbReference type="GO" id="GO:0003700">
    <property type="term" value="F:DNA-binding transcription factor activity"/>
    <property type="evidence" value="ECO:0000318"/>
    <property type="project" value="GO_Central"/>
</dbReference>
<dbReference type="GO" id="GO:0043565">
    <property type="term" value="F:sequence-specific DNA binding"/>
    <property type="evidence" value="ECO:0000318"/>
    <property type="project" value="GO_Central"/>
</dbReference>
<dbReference type="GO" id="GO:0036377">
    <property type="term" value="P:arbuscular mycorrhizal association"/>
    <property type="evidence" value="ECO:0000315"/>
    <property type="project" value="UniProtKB"/>
</dbReference>
<dbReference type="GO" id="GO:0016036">
    <property type="term" value="P:cellular response to phosphate starvation"/>
    <property type="evidence" value="ECO:0000270"/>
    <property type="project" value="UniProtKB"/>
</dbReference>
<dbReference type="GO" id="GO:0009740">
    <property type="term" value="P:gibberellic acid mediated signaling pathway"/>
    <property type="evidence" value="ECO:0000250"/>
    <property type="project" value="UniProtKB"/>
</dbReference>
<dbReference type="GO" id="GO:0042538">
    <property type="term" value="P:hyperosmotic salinity response"/>
    <property type="evidence" value="ECO:0000318"/>
    <property type="project" value="GO_Central"/>
</dbReference>
<dbReference type="GO" id="GO:0009867">
    <property type="term" value="P:jasmonic acid mediated signaling pathway"/>
    <property type="evidence" value="ECO:0000318"/>
    <property type="project" value="GO_Central"/>
</dbReference>
<dbReference type="GO" id="GO:0009938">
    <property type="term" value="P:negative regulation of gibberellic acid mediated signaling pathway"/>
    <property type="evidence" value="ECO:0000318"/>
    <property type="project" value="GO_Central"/>
</dbReference>
<dbReference type="GO" id="GO:0010187">
    <property type="term" value="P:negative regulation of seed germination"/>
    <property type="evidence" value="ECO:0000318"/>
    <property type="project" value="GO_Central"/>
</dbReference>
<dbReference type="GO" id="GO:0045944">
    <property type="term" value="P:positive regulation of transcription by RNA polymerase II"/>
    <property type="evidence" value="ECO:0000315"/>
    <property type="project" value="UniProtKB"/>
</dbReference>
<dbReference type="GO" id="GO:0006355">
    <property type="term" value="P:regulation of DNA-templated transcription"/>
    <property type="evidence" value="ECO:0000318"/>
    <property type="project" value="GO_Central"/>
</dbReference>
<dbReference type="GO" id="GO:2000377">
    <property type="term" value="P:regulation of reactive oxygen species metabolic process"/>
    <property type="evidence" value="ECO:0000318"/>
    <property type="project" value="GO_Central"/>
</dbReference>
<dbReference type="GO" id="GO:2000033">
    <property type="term" value="P:regulation of seed dormancy process"/>
    <property type="evidence" value="ECO:0000318"/>
    <property type="project" value="GO_Central"/>
</dbReference>
<dbReference type="GO" id="GO:0009737">
    <property type="term" value="P:response to abscisic acid"/>
    <property type="evidence" value="ECO:0000318"/>
    <property type="project" value="GO_Central"/>
</dbReference>
<dbReference type="GO" id="GO:0009723">
    <property type="term" value="P:response to ethylene"/>
    <property type="evidence" value="ECO:0000318"/>
    <property type="project" value="GO_Central"/>
</dbReference>
<dbReference type="GO" id="GO:0009610">
    <property type="term" value="P:response to symbiotic fungus"/>
    <property type="evidence" value="ECO:0000270"/>
    <property type="project" value="UniProtKB"/>
</dbReference>
<dbReference type="GO" id="GO:0009863">
    <property type="term" value="P:salicylic acid mediated signaling pathway"/>
    <property type="evidence" value="ECO:0000318"/>
    <property type="project" value="GO_Central"/>
</dbReference>
<dbReference type="FunFam" id="1.10.10.1290:FF:000001">
    <property type="entry name" value="DELLA protein GAI"/>
    <property type="match status" value="1"/>
</dbReference>
<dbReference type="Gene3D" id="1.10.10.1290">
    <property type="entry name" value="Transcriptional regulator DELLA, N-terminal domain"/>
    <property type="match status" value="1"/>
</dbReference>
<dbReference type="InterPro" id="IPR038088">
    <property type="entry name" value="DELLA_N_sf"/>
</dbReference>
<dbReference type="InterPro" id="IPR021914">
    <property type="entry name" value="TF_DELLA_N"/>
</dbReference>
<dbReference type="InterPro" id="IPR005202">
    <property type="entry name" value="TF_GRAS"/>
</dbReference>
<dbReference type="PANTHER" id="PTHR31636">
    <property type="entry name" value="OSJNBA0084A10.13 PROTEIN-RELATED"/>
    <property type="match status" value="1"/>
</dbReference>
<dbReference type="Pfam" id="PF12041">
    <property type="entry name" value="DELLA"/>
    <property type="match status" value="1"/>
</dbReference>
<dbReference type="Pfam" id="PF03514">
    <property type="entry name" value="GRAS"/>
    <property type="match status" value="1"/>
</dbReference>
<dbReference type="SMART" id="SM01129">
    <property type="entry name" value="DELLA"/>
    <property type="match status" value="1"/>
</dbReference>
<dbReference type="PROSITE" id="PS50985">
    <property type="entry name" value="GRAS"/>
    <property type="match status" value="1"/>
</dbReference>